<comment type="function">
    <text evidence="1">Catalyzes the initial step of the lipid cycle reactions in the biosynthesis of the cell wall peptidoglycan: transfers peptidoglycan precursor phospho-MurNAc-pentapeptide from UDP-MurNAc-pentapeptide onto the lipid carrier undecaprenyl phosphate, yielding undecaprenyl-pyrophosphoryl-MurNAc-pentapeptide, known as lipid I.</text>
</comment>
<comment type="catalytic activity">
    <reaction evidence="1">
        <text>UDP-N-acetyl-alpha-D-muramoyl-L-alanyl-gamma-D-glutamyl-meso-2,6-diaminopimeloyl-D-alanyl-D-alanine + di-trans,octa-cis-undecaprenyl phosphate = di-trans,octa-cis-undecaprenyl diphospho-N-acetyl-alpha-D-muramoyl-L-alanyl-D-glutamyl-meso-2,6-diaminopimeloyl-D-alanyl-D-alanine + UMP</text>
        <dbReference type="Rhea" id="RHEA:28386"/>
        <dbReference type="ChEBI" id="CHEBI:57865"/>
        <dbReference type="ChEBI" id="CHEBI:60392"/>
        <dbReference type="ChEBI" id="CHEBI:61386"/>
        <dbReference type="ChEBI" id="CHEBI:61387"/>
        <dbReference type="EC" id="2.7.8.13"/>
    </reaction>
</comment>
<comment type="cofactor">
    <cofactor evidence="1">
        <name>Mg(2+)</name>
        <dbReference type="ChEBI" id="CHEBI:18420"/>
    </cofactor>
</comment>
<comment type="pathway">
    <text evidence="1">Cell wall biogenesis; peptidoglycan biosynthesis.</text>
</comment>
<comment type="subcellular location">
    <subcellularLocation>
        <location evidence="1">Cell membrane</location>
        <topology evidence="1">Multi-pass membrane protein</topology>
    </subcellularLocation>
</comment>
<comment type="similarity">
    <text evidence="1">Belongs to the glycosyltransferase 4 family. MraY subfamily.</text>
</comment>
<evidence type="ECO:0000255" key="1">
    <source>
        <dbReference type="HAMAP-Rule" id="MF_00038"/>
    </source>
</evidence>
<keyword id="KW-0131">Cell cycle</keyword>
<keyword id="KW-0132">Cell division</keyword>
<keyword id="KW-1003">Cell membrane</keyword>
<keyword id="KW-0133">Cell shape</keyword>
<keyword id="KW-0961">Cell wall biogenesis/degradation</keyword>
<keyword id="KW-0460">Magnesium</keyword>
<keyword id="KW-0472">Membrane</keyword>
<keyword id="KW-0479">Metal-binding</keyword>
<keyword id="KW-0573">Peptidoglycan synthesis</keyword>
<keyword id="KW-0808">Transferase</keyword>
<keyword id="KW-0812">Transmembrane</keyword>
<keyword id="KW-1133">Transmembrane helix</keyword>
<gene>
    <name evidence="1" type="primary">mraY</name>
    <name type="ordered locus">WRi_012770</name>
</gene>
<accession>C0R4W3</accession>
<name>MRAY_WOLWR</name>
<sequence length="326" mass="36412">MILATKVFFTSFVFGFILFPYFIKLLKKISKDGQPIRSCGPESHLITKKNVPPMGGIIILTSSLLPILLWVQLTPEILLLILITLFFALLGFIDDYLKLKTNHYRGLSAKTKILIQFIVALVGVFILKLYSAECFTKTSLFKGVIIDFGYLYVPFAAFVIVGSSNAVNLTDGLDGLAATQVITSFAFLGLIAYITQADMNITLFCIAFIGAILSFLWFNTHPAKIFMGDVGSLSVGAALGLTSVLIKREMLFAVIGIIFVIETLSVIIQISYFKYTKFKYGEGKRVFLMAPMHHHFEKKGWSENVIVMKFWIISIICSVFTITFLL</sequence>
<protein>
    <recommendedName>
        <fullName evidence="1">Phospho-N-acetylmuramoyl-pentapeptide-transferase</fullName>
        <ecNumber evidence="1">2.7.8.13</ecNumber>
    </recommendedName>
    <alternativeName>
        <fullName evidence="1">UDP-MurNAc-pentapeptide phosphotransferase</fullName>
    </alternativeName>
</protein>
<reference key="1">
    <citation type="journal article" date="2009" name="Proc. Natl. Acad. Sci. U.S.A.">
        <title>The mosaic genome structure of the Wolbachia wRi strain infecting Drosophila simulans.</title>
        <authorList>
            <person name="Klasson L."/>
            <person name="Westberg J."/>
            <person name="Sapountzis P."/>
            <person name="Naeslund K."/>
            <person name="Lutnaes Y."/>
            <person name="Darby A.C."/>
            <person name="Veneti Z."/>
            <person name="Chen L."/>
            <person name="Braig H.R."/>
            <person name="Garrett R."/>
            <person name="Bourtzis K."/>
            <person name="Andersson S.G."/>
        </authorList>
    </citation>
    <scope>NUCLEOTIDE SEQUENCE [LARGE SCALE GENOMIC DNA]</scope>
    <source>
        <strain>wRi</strain>
    </source>
</reference>
<proteinExistence type="inferred from homology"/>
<feature type="chain" id="PRO_1000117207" description="Phospho-N-acetylmuramoyl-pentapeptide-transferase">
    <location>
        <begin position="1"/>
        <end position="326"/>
    </location>
</feature>
<feature type="transmembrane region" description="Helical" evidence="1">
    <location>
        <begin position="2"/>
        <end position="22"/>
    </location>
</feature>
<feature type="transmembrane region" description="Helical" evidence="1">
    <location>
        <begin position="51"/>
        <end position="71"/>
    </location>
</feature>
<feature type="transmembrane region" description="Helical" evidence="1">
    <location>
        <begin position="73"/>
        <end position="93"/>
    </location>
</feature>
<feature type="transmembrane region" description="Helical" evidence="1">
    <location>
        <begin position="113"/>
        <end position="133"/>
    </location>
</feature>
<feature type="transmembrane region" description="Helical" evidence="1">
    <location>
        <begin position="143"/>
        <end position="163"/>
    </location>
</feature>
<feature type="transmembrane region" description="Helical" evidence="1">
    <location>
        <begin position="175"/>
        <end position="195"/>
    </location>
</feature>
<feature type="transmembrane region" description="Helical" evidence="1">
    <location>
        <begin position="199"/>
        <end position="219"/>
    </location>
</feature>
<feature type="transmembrane region" description="Helical" evidence="1">
    <location>
        <begin position="225"/>
        <end position="245"/>
    </location>
</feature>
<feature type="transmembrane region" description="Helical" evidence="1">
    <location>
        <begin position="250"/>
        <end position="270"/>
    </location>
</feature>
<feature type="transmembrane region" description="Helical" evidence="1">
    <location>
        <begin position="305"/>
        <end position="325"/>
    </location>
</feature>
<dbReference type="EC" id="2.7.8.13" evidence="1"/>
<dbReference type="EMBL" id="CP001391">
    <property type="protein sequence ID" value="ACN95955.1"/>
    <property type="molecule type" value="Genomic_DNA"/>
</dbReference>
<dbReference type="RefSeq" id="WP_007548592.1">
    <property type="nucleotide sequence ID" value="NZ_MKIF01000107.1"/>
</dbReference>
<dbReference type="SMR" id="C0R4W3"/>
<dbReference type="STRING" id="66084.WRi_012770"/>
<dbReference type="KEGG" id="wri:WRi_012770"/>
<dbReference type="HOGENOM" id="CLU_023982_0_1_5"/>
<dbReference type="UniPathway" id="UPA00219"/>
<dbReference type="Proteomes" id="UP000001293">
    <property type="component" value="Chromosome"/>
</dbReference>
<dbReference type="GO" id="GO:0005886">
    <property type="term" value="C:plasma membrane"/>
    <property type="evidence" value="ECO:0007669"/>
    <property type="project" value="UniProtKB-SubCell"/>
</dbReference>
<dbReference type="GO" id="GO:0046872">
    <property type="term" value="F:metal ion binding"/>
    <property type="evidence" value="ECO:0007669"/>
    <property type="project" value="UniProtKB-KW"/>
</dbReference>
<dbReference type="GO" id="GO:0008963">
    <property type="term" value="F:phospho-N-acetylmuramoyl-pentapeptide-transferase activity"/>
    <property type="evidence" value="ECO:0007669"/>
    <property type="project" value="UniProtKB-UniRule"/>
</dbReference>
<dbReference type="GO" id="GO:0051992">
    <property type="term" value="F:UDP-N-acetylmuramoyl-L-alanyl-D-glutamyl-meso-2,6-diaminopimelyl-D-alanyl-D-alanine:undecaprenyl-phosphate transferase activity"/>
    <property type="evidence" value="ECO:0007669"/>
    <property type="project" value="RHEA"/>
</dbReference>
<dbReference type="GO" id="GO:0051301">
    <property type="term" value="P:cell division"/>
    <property type="evidence" value="ECO:0007669"/>
    <property type="project" value="UniProtKB-KW"/>
</dbReference>
<dbReference type="GO" id="GO:0071555">
    <property type="term" value="P:cell wall organization"/>
    <property type="evidence" value="ECO:0007669"/>
    <property type="project" value="UniProtKB-KW"/>
</dbReference>
<dbReference type="GO" id="GO:0009252">
    <property type="term" value="P:peptidoglycan biosynthetic process"/>
    <property type="evidence" value="ECO:0007669"/>
    <property type="project" value="UniProtKB-UniRule"/>
</dbReference>
<dbReference type="GO" id="GO:0008360">
    <property type="term" value="P:regulation of cell shape"/>
    <property type="evidence" value="ECO:0007669"/>
    <property type="project" value="UniProtKB-KW"/>
</dbReference>
<dbReference type="CDD" id="cd06852">
    <property type="entry name" value="GT_MraY"/>
    <property type="match status" value="1"/>
</dbReference>
<dbReference type="HAMAP" id="MF_00038">
    <property type="entry name" value="MraY"/>
    <property type="match status" value="1"/>
</dbReference>
<dbReference type="InterPro" id="IPR000715">
    <property type="entry name" value="Glycosyl_transferase_4"/>
</dbReference>
<dbReference type="InterPro" id="IPR003524">
    <property type="entry name" value="PNAcMuramoyl-5peptid_Trfase"/>
</dbReference>
<dbReference type="InterPro" id="IPR018480">
    <property type="entry name" value="PNAcMuramoyl-5peptid_Trfase_CS"/>
</dbReference>
<dbReference type="NCBIfam" id="TIGR00445">
    <property type="entry name" value="mraY"/>
    <property type="match status" value="1"/>
</dbReference>
<dbReference type="PANTHER" id="PTHR22926">
    <property type="entry name" value="PHOSPHO-N-ACETYLMURAMOYL-PENTAPEPTIDE-TRANSFERASE"/>
    <property type="match status" value="1"/>
</dbReference>
<dbReference type="PANTHER" id="PTHR22926:SF5">
    <property type="entry name" value="PHOSPHO-N-ACETYLMURAMOYL-PENTAPEPTIDE-TRANSFERASE HOMOLOG"/>
    <property type="match status" value="1"/>
</dbReference>
<dbReference type="Pfam" id="PF00953">
    <property type="entry name" value="Glycos_transf_4"/>
    <property type="match status" value="1"/>
</dbReference>
<dbReference type="PROSITE" id="PS01348">
    <property type="entry name" value="MRAY_2"/>
    <property type="match status" value="1"/>
</dbReference>
<organism>
    <name type="scientific">Wolbachia sp. subsp. Drosophila simulans (strain wRi)</name>
    <dbReference type="NCBI Taxonomy" id="66084"/>
    <lineage>
        <taxon>Bacteria</taxon>
        <taxon>Pseudomonadati</taxon>
        <taxon>Pseudomonadota</taxon>
        <taxon>Alphaproteobacteria</taxon>
        <taxon>Rickettsiales</taxon>
        <taxon>Anaplasmataceae</taxon>
        <taxon>Wolbachieae</taxon>
        <taxon>Wolbachia</taxon>
    </lineage>
</organism>